<name>DAPB_METKA</name>
<sequence>MIGVVVLGATGRMGRRICRMVIEDEELELVGAIASPTSKHLGRDVGLVIGVGETGVEIAPPTALPNIAKDADVAIDFTVREATLENAPKAARAGLDLVIGTTGFSDEDLRVLEHEIEEAGVSAVISPNMSLGVNLLFELTRQLARVLGDNGFDFEIVEIHHRHKVDAPSGTALELAAIIEEELGKGEKVFGREGNVGPRDDDEIGVLAVRGGEVVGDHTVMALGEYERIELTHRALSRDAFAKGALVAAKFVVEAPPGIYSMRDVLFGGKRGEGL</sequence>
<feature type="chain" id="PRO_0000141519" description="4-hydroxy-tetrahydrodipicolinate reductase">
    <location>
        <begin position="1"/>
        <end position="275"/>
    </location>
</feature>
<feature type="active site" description="Proton donor/acceptor" evidence="1">
    <location>
        <position position="160"/>
    </location>
</feature>
<feature type="active site" description="Proton donor" evidence="1">
    <location>
        <position position="164"/>
    </location>
</feature>
<feature type="binding site" evidence="1">
    <location>
        <begin position="8"/>
        <end position="13"/>
    </location>
    <ligand>
        <name>NAD(+)</name>
        <dbReference type="ChEBI" id="CHEBI:57540"/>
    </ligand>
</feature>
<feature type="binding site" evidence="1">
    <location>
        <begin position="100"/>
        <end position="102"/>
    </location>
    <ligand>
        <name>NAD(+)</name>
        <dbReference type="ChEBI" id="CHEBI:57540"/>
    </ligand>
</feature>
<feature type="binding site" evidence="1">
    <location>
        <begin position="126"/>
        <end position="129"/>
    </location>
    <ligand>
        <name>NAD(+)</name>
        <dbReference type="ChEBI" id="CHEBI:57540"/>
    </ligand>
</feature>
<feature type="binding site" evidence="1">
    <location>
        <position position="161"/>
    </location>
    <ligand>
        <name>(S)-2,3,4,5-tetrahydrodipicolinate</name>
        <dbReference type="ChEBI" id="CHEBI:16845"/>
    </ligand>
</feature>
<feature type="binding site" evidence="1">
    <location>
        <begin position="170"/>
        <end position="171"/>
    </location>
    <ligand>
        <name>(S)-2,3,4,5-tetrahydrodipicolinate</name>
        <dbReference type="ChEBI" id="CHEBI:16845"/>
    </ligand>
</feature>
<gene>
    <name evidence="1" type="primary">dapB</name>
    <name type="ordered locus">MK1422</name>
</gene>
<reference key="1">
    <citation type="journal article" date="2002" name="Proc. Natl. Acad. Sci. U.S.A.">
        <title>The complete genome of hyperthermophile Methanopyrus kandleri AV19 and monophyly of archaeal methanogens.</title>
        <authorList>
            <person name="Slesarev A.I."/>
            <person name="Mezhevaya K.V."/>
            <person name="Makarova K.S."/>
            <person name="Polushin N.N."/>
            <person name="Shcherbinina O.V."/>
            <person name="Shakhova V.V."/>
            <person name="Belova G.I."/>
            <person name="Aravind L."/>
            <person name="Natale D.A."/>
            <person name="Rogozin I.B."/>
            <person name="Tatusov R.L."/>
            <person name="Wolf Y.I."/>
            <person name="Stetter K.O."/>
            <person name="Malykh A.G."/>
            <person name="Koonin E.V."/>
            <person name="Kozyavkin S.A."/>
        </authorList>
    </citation>
    <scope>NUCLEOTIDE SEQUENCE [LARGE SCALE GENOMIC DNA]</scope>
    <source>
        <strain>AV19 / DSM 6324 / JCM 9639 / NBRC 100938</strain>
    </source>
</reference>
<comment type="function">
    <text evidence="1">Catalyzes the conversion of 4-hydroxy-tetrahydrodipicolinate (HTPA) to tetrahydrodipicolinate.</text>
</comment>
<comment type="catalytic activity">
    <reaction evidence="1">
        <text>(S)-2,3,4,5-tetrahydrodipicolinate + NAD(+) + H2O = (2S,4S)-4-hydroxy-2,3,4,5-tetrahydrodipicolinate + NADH + H(+)</text>
        <dbReference type="Rhea" id="RHEA:35323"/>
        <dbReference type="ChEBI" id="CHEBI:15377"/>
        <dbReference type="ChEBI" id="CHEBI:15378"/>
        <dbReference type="ChEBI" id="CHEBI:16845"/>
        <dbReference type="ChEBI" id="CHEBI:57540"/>
        <dbReference type="ChEBI" id="CHEBI:57945"/>
        <dbReference type="ChEBI" id="CHEBI:67139"/>
        <dbReference type="EC" id="1.17.1.8"/>
    </reaction>
</comment>
<comment type="catalytic activity">
    <reaction evidence="1">
        <text>(S)-2,3,4,5-tetrahydrodipicolinate + NADP(+) + H2O = (2S,4S)-4-hydroxy-2,3,4,5-tetrahydrodipicolinate + NADPH + H(+)</text>
        <dbReference type="Rhea" id="RHEA:35331"/>
        <dbReference type="ChEBI" id="CHEBI:15377"/>
        <dbReference type="ChEBI" id="CHEBI:15378"/>
        <dbReference type="ChEBI" id="CHEBI:16845"/>
        <dbReference type="ChEBI" id="CHEBI:57783"/>
        <dbReference type="ChEBI" id="CHEBI:58349"/>
        <dbReference type="ChEBI" id="CHEBI:67139"/>
        <dbReference type="EC" id="1.17.1.8"/>
    </reaction>
</comment>
<comment type="pathway">
    <text evidence="1">Amino-acid biosynthesis; L-lysine biosynthesis via DAP pathway; (S)-tetrahydrodipicolinate from L-aspartate: step 4/4.</text>
</comment>
<comment type="subcellular location">
    <subcellularLocation>
        <location evidence="1">Cytoplasm</location>
    </subcellularLocation>
</comment>
<comment type="similarity">
    <text evidence="1">Belongs to the DapB family.</text>
</comment>
<comment type="caution">
    <text evidence="2">Was originally thought to be a dihydrodipicolinate reductase (DHDPR), catalyzing the conversion of dihydrodipicolinate to tetrahydrodipicolinate. However, it was shown in E.coli that the substrate of the enzymatic reaction is not dihydrodipicolinate (DHDP) but in fact (2S,4S)-4-hydroxy-2,3,4,5-tetrahydrodipicolinic acid (HTPA), the product released by the DapA-catalyzed reaction.</text>
</comment>
<protein>
    <recommendedName>
        <fullName evidence="1">4-hydroxy-tetrahydrodipicolinate reductase</fullName>
        <shortName evidence="1">HTPA reductase</shortName>
        <ecNumber evidence="1">1.17.1.8</ecNumber>
    </recommendedName>
</protein>
<accession>Q8TVG7</accession>
<organism>
    <name type="scientific">Methanopyrus kandleri (strain AV19 / DSM 6324 / JCM 9639 / NBRC 100938)</name>
    <dbReference type="NCBI Taxonomy" id="190192"/>
    <lineage>
        <taxon>Archaea</taxon>
        <taxon>Methanobacteriati</taxon>
        <taxon>Methanobacteriota</taxon>
        <taxon>Methanomada group</taxon>
        <taxon>Methanopyri</taxon>
        <taxon>Methanopyrales</taxon>
        <taxon>Methanopyraceae</taxon>
        <taxon>Methanopyrus</taxon>
    </lineage>
</organism>
<evidence type="ECO:0000255" key="1">
    <source>
        <dbReference type="HAMAP-Rule" id="MF_00102"/>
    </source>
</evidence>
<evidence type="ECO:0000305" key="2"/>
<keyword id="KW-0028">Amino-acid biosynthesis</keyword>
<keyword id="KW-0963">Cytoplasm</keyword>
<keyword id="KW-0220">Diaminopimelate biosynthesis</keyword>
<keyword id="KW-0457">Lysine biosynthesis</keyword>
<keyword id="KW-0520">NAD</keyword>
<keyword id="KW-0521">NADP</keyword>
<keyword id="KW-0560">Oxidoreductase</keyword>
<keyword id="KW-1185">Reference proteome</keyword>
<proteinExistence type="inferred from homology"/>
<dbReference type="EC" id="1.17.1.8" evidence="1"/>
<dbReference type="EMBL" id="AE009439">
    <property type="protein sequence ID" value="AAM02635.1"/>
    <property type="molecule type" value="Genomic_DNA"/>
</dbReference>
<dbReference type="RefSeq" id="WP_011019790.1">
    <property type="nucleotide sequence ID" value="NC_003551.1"/>
</dbReference>
<dbReference type="SMR" id="Q8TVG7"/>
<dbReference type="FunCoup" id="Q8TVG7">
    <property type="interactions" value="82"/>
</dbReference>
<dbReference type="STRING" id="190192.MK1422"/>
<dbReference type="PaxDb" id="190192-MK1422"/>
<dbReference type="EnsemblBacteria" id="AAM02635">
    <property type="protein sequence ID" value="AAM02635"/>
    <property type="gene ID" value="MK1422"/>
</dbReference>
<dbReference type="GeneID" id="1478017"/>
<dbReference type="KEGG" id="mka:MK1422"/>
<dbReference type="PATRIC" id="fig|190192.8.peg.1578"/>
<dbReference type="HOGENOM" id="CLU_047479_2_1_2"/>
<dbReference type="InParanoid" id="Q8TVG7"/>
<dbReference type="OrthoDB" id="195035at2157"/>
<dbReference type="UniPathway" id="UPA00034">
    <property type="reaction ID" value="UER00018"/>
</dbReference>
<dbReference type="Proteomes" id="UP000001826">
    <property type="component" value="Chromosome"/>
</dbReference>
<dbReference type="GO" id="GO:0005829">
    <property type="term" value="C:cytosol"/>
    <property type="evidence" value="ECO:0007669"/>
    <property type="project" value="TreeGrafter"/>
</dbReference>
<dbReference type="GO" id="GO:0008839">
    <property type="term" value="F:4-hydroxy-tetrahydrodipicolinate reductase"/>
    <property type="evidence" value="ECO:0007669"/>
    <property type="project" value="UniProtKB-EC"/>
</dbReference>
<dbReference type="GO" id="GO:0051287">
    <property type="term" value="F:NAD binding"/>
    <property type="evidence" value="ECO:0007669"/>
    <property type="project" value="UniProtKB-UniRule"/>
</dbReference>
<dbReference type="GO" id="GO:0050661">
    <property type="term" value="F:NADP binding"/>
    <property type="evidence" value="ECO:0007669"/>
    <property type="project" value="UniProtKB-UniRule"/>
</dbReference>
<dbReference type="GO" id="GO:0016726">
    <property type="term" value="F:oxidoreductase activity, acting on CH or CH2 groups, NAD or NADP as acceptor"/>
    <property type="evidence" value="ECO:0007669"/>
    <property type="project" value="UniProtKB-UniRule"/>
</dbReference>
<dbReference type="GO" id="GO:0019877">
    <property type="term" value="P:diaminopimelate biosynthetic process"/>
    <property type="evidence" value="ECO:0007669"/>
    <property type="project" value="UniProtKB-UniRule"/>
</dbReference>
<dbReference type="GO" id="GO:0009089">
    <property type="term" value="P:lysine biosynthetic process via diaminopimelate"/>
    <property type="evidence" value="ECO:0007669"/>
    <property type="project" value="UniProtKB-UniRule"/>
</dbReference>
<dbReference type="CDD" id="cd02274">
    <property type="entry name" value="DHDPR_N"/>
    <property type="match status" value="1"/>
</dbReference>
<dbReference type="FunFam" id="3.30.360.10:FF:000004">
    <property type="entry name" value="4-hydroxy-tetrahydrodipicolinate reductase"/>
    <property type="match status" value="1"/>
</dbReference>
<dbReference type="Gene3D" id="3.30.360.10">
    <property type="entry name" value="Dihydrodipicolinate Reductase, domain 2"/>
    <property type="match status" value="1"/>
</dbReference>
<dbReference type="Gene3D" id="3.40.50.720">
    <property type="entry name" value="NAD(P)-binding Rossmann-like Domain"/>
    <property type="match status" value="1"/>
</dbReference>
<dbReference type="HAMAP" id="MF_00102">
    <property type="entry name" value="DapB"/>
    <property type="match status" value="1"/>
</dbReference>
<dbReference type="InterPro" id="IPR022663">
    <property type="entry name" value="DapB_C"/>
</dbReference>
<dbReference type="InterPro" id="IPR000846">
    <property type="entry name" value="DapB_N"/>
</dbReference>
<dbReference type="InterPro" id="IPR022664">
    <property type="entry name" value="DapB_N_CS"/>
</dbReference>
<dbReference type="InterPro" id="IPR023940">
    <property type="entry name" value="DHDPR_bac"/>
</dbReference>
<dbReference type="InterPro" id="IPR036291">
    <property type="entry name" value="NAD(P)-bd_dom_sf"/>
</dbReference>
<dbReference type="NCBIfam" id="TIGR00036">
    <property type="entry name" value="dapB"/>
    <property type="match status" value="1"/>
</dbReference>
<dbReference type="PANTHER" id="PTHR20836:SF0">
    <property type="entry name" value="4-HYDROXY-TETRAHYDRODIPICOLINATE REDUCTASE 1, CHLOROPLASTIC-RELATED"/>
    <property type="match status" value="1"/>
</dbReference>
<dbReference type="PANTHER" id="PTHR20836">
    <property type="entry name" value="DIHYDRODIPICOLINATE REDUCTASE"/>
    <property type="match status" value="1"/>
</dbReference>
<dbReference type="Pfam" id="PF05173">
    <property type="entry name" value="DapB_C"/>
    <property type="match status" value="1"/>
</dbReference>
<dbReference type="Pfam" id="PF01113">
    <property type="entry name" value="DapB_N"/>
    <property type="match status" value="1"/>
</dbReference>
<dbReference type="PIRSF" id="PIRSF000161">
    <property type="entry name" value="DHPR"/>
    <property type="match status" value="1"/>
</dbReference>
<dbReference type="SUPFAM" id="SSF55347">
    <property type="entry name" value="Glyceraldehyde-3-phosphate dehydrogenase-like, C-terminal domain"/>
    <property type="match status" value="1"/>
</dbReference>
<dbReference type="SUPFAM" id="SSF51735">
    <property type="entry name" value="NAD(P)-binding Rossmann-fold domains"/>
    <property type="match status" value="1"/>
</dbReference>
<dbReference type="PROSITE" id="PS01298">
    <property type="entry name" value="DAPB"/>
    <property type="match status" value="1"/>
</dbReference>